<protein>
    <recommendedName>
        <fullName evidence="1">Phosphoglucosamine mutase</fullName>
        <ecNumber evidence="1">5.4.2.10</ecNumber>
    </recommendedName>
</protein>
<accession>B0U6T2</accession>
<keyword id="KW-0413">Isomerase</keyword>
<keyword id="KW-0460">Magnesium</keyword>
<keyword id="KW-0479">Metal-binding</keyword>
<keyword id="KW-0597">Phosphoprotein</keyword>
<reference key="1">
    <citation type="journal article" date="2010" name="J. Bacteriol.">
        <title>Whole genome sequences of two Xylella fastidiosa strains (M12 and M23) causing almond leaf scorch disease in California.</title>
        <authorList>
            <person name="Chen J."/>
            <person name="Xie G."/>
            <person name="Han S."/>
            <person name="Chertkov O."/>
            <person name="Sims D."/>
            <person name="Civerolo E.L."/>
        </authorList>
    </citation>
    <scope>NUCLEOTIDE SEQUENCE [LARGE SCALE GENOMIC DNA]</scope>
    <source>
        <strain>M12</strain>
    </source>
</reference>
<comment type="function">
    <text evidence="1">Catalyzes the conversion of glucosamine-6-phosphate to glucosamine-1-phosphate.</text>
</comment>
<comment type="catalytic activity">
    <reaction evidence="1">
        <text>alpha-D-glucosamine 1-phosphate = D-glucosamine 6-phosphate</text>
        <dbReference type="Rhea" id="RHEA:23424"/>
        <dbReference type="ChEBI" id="CHEBI:58516"/>
        <dbReference type="ChEBI" id="CHEBI:58725"/>
        <dbReference type="EC" id="5.4.2.10"/>
    </reaction>
</comment>
<comment type="cofactor">
    <cofactor evidence="1">
        <name>Mg(2+)</name>
        <dbReference type="ChEBI" id="CHEBI:18420"/>
    </cofactor>
    <text evidence="1">Binds 1 Mg(2+) ion per subunit.</text>
</comment>
<comment type="PTM">
    <text evidence="1">Activated by phosphorylation.</text>
</comment>
<comment type="similarity">
    <text evidence="1">Belongs to the phosphohexose mutase family.</text>
</comment>
<proteinExistence type="inferred from homology"/>
<evidence type="ECO:0000255" key="1">
    <source>
        <dbReference type="HAMAP-Rule" id="MF_01554"/>
    </source>
</evidence>
<gene>
    <name evidence="1" type="primary">glmM</name>
    <name type="ordered locus">Xfasm12_0810</name>
</gene>
<feature type="chain" id="PRO_0000343606" description="Phosphoglucosamine mutase">
    <location>
        <begin position="1"/>
        <end position="446"/>
    </location>
</feature>
<feature type="active site" description="Phosphoserine intermediate" evidence="1">
    <location>
        <position position="102"/>
    </location>
</feature>
<feature type="binding site" description="via phosphate group" evidence="1">
    <location>
        <position position="102"/>
    </location>
    <ligand>
        <name>Mg(2+)</name>
        <dbReference type="ChEBI" id="CHEBI:18420"/>
    </ligand>
</feature>
<feature type="binding site" evidence="1">
    <location>
        <position position="241"/>
    </location>
    <ligand>
        <name>Mg(2+)</name>
        <dbReference type="ChEBI" id="CHEBI:18420"/>
    </ligand>
</feature>
<feature type="binding site" evidence="1">
    <location>
        <position position="243"/>
    </location>
    <ligand>
        <name>Mg(2+)</name>
        <dbReference type="ChEBI" id="CHEBI:18420"/>
    </ligand>
</feature>
<feature type="binding site" evidence="1">
    <location>
        <position position="245"/>
    </location>
    <ligand>
        <name>Mg(2+)</name>
        <dbReference type="ChEBI" id="CHEBI:18420"/>
    </ligand>
</feature>
<feature type="modified residue" description="Phosphoserine" evidence="1">
    <location>
        <position position="102"/>
    </location>
</feature>
<sequence length="446" mass="47176">MSRYFGTDGIRGRVGQGLISADFVLRLGNALGRVLAQGRDTRPMVLIGKDTRISGYMFESALEAGLVAAGADVQLIGPMPTPAIAFLTNTLRADAGVVISASHNPHDDNGIKFFSAMGEKLDDATEAAIEAAIEAPFLTVDSEYLGKVKRTRDAIGRYIEFSKASVSRGFTLRGLKLVLDCAHGATYHIAPMLFRELGAELVAIGVDPDGLNINAGVGSTHLETLAATVRESGADLGIAFDGDGDRVLMTDAQGRTVDGDDLLYVLARAWRASGRLKGTVVGTLMSNYGLEQALGTLGIPFIRAKVGDRYVHQALVESGGVLGGEASGHLLCLDRATTGDGIVSALQVLEVLRHEGLTLSQALLGLHKVPQKTVNVCWSGPARAAVEMPEVRQALVEAQAAVQGRGRVFLRPSGTEPVVRITVEADDVVLMQQTLDRLADVVRDAA</sequence>
<name>GLMM_XYLFM</name>
<organism>
    <name type="scientific">Xylella fastidiosa (strain M12)</name>
    <dbReference type="NCBI Taxonomy" id="405440"/>
    <lineage>
        <taxon>Bacteria</taxon>
        <taxon>Pseudomonadati</taxon>
        <taxon>Pseudomonadota</taxon>
        <taxon>Gammaproteobacteria</taxon>
        <taxon>Lysobacterales</taxon>
        <taxon>Lysobacteraceae</taxon>
        <taxon>Xylella</taxon>
    </lineage>
</organism>
<dbReference type="EC" id="5.4.2.10" evidence="1"/>
<dbReference type="EMBL" id="CP000941">
    <property type="protein sequence ID" value="ACA11798.1"/>
    <property type="molecule type" value="Genomic_DNA"/>
</dbReference>
<dbReference type="SMR" id="B0U6T2"/>
<dbReference type="KEGG" id="xfm:Xfasm12_0810"/>
<dbReference type="HOGENOM" id="CLU_016950_7_0_6"/>
<dbReference type="GO" id="GO:0005829">
    <property type="term" value="C:cytosol"/>
    <property type="evidence" value="ECO:0007669"/>
    <property type="project" value="TreeGrafter"/>
</dbReference>
<dbReference type="GO" id="GO:0000287">
    <property type="term" value="F:magnesium ion binding"/>
    <property type="evidence" value="ECO:0007669"/>
    <property type="project" value="UniProtKB-UniRule"/>
</dbReference>
<dbReference type="GO" id="GO:0008966">
    <property type="term" value="F:phosphoglucosamine mutase activity"/>
    <property type="evidence" value="ECO:0007669"/>
    <property type="project" value="UniProtKB-UniRule"/>
</dbReference>
<dbReference type="GO" id="GO:0004615">
    <property type="term" value="F:phosphomannomutase activity"/>
    <property type="evidence" value="ECO:0007669"/>
    <property type="project" value="TreeGrafter"/>
</dbReference>
<dbReference type="GO" id="GO:0005975">
    <property type="term" value="P:carbohydrate metabolic process"/>
    <property type="evidence" value="ECO:0007669"/>
    <property type="project" value="InterPro"/>
</dbReference>
<dbReference type="GO" id="GO:0009252">
    <property type="term" value="P:peptidoglycan biosynthetic process"/>
    <property type="evidence" value="ECO:0007669"/>
    <property type="project" value="TreeGrafter"/>
</dbReference>
<dbReference type="GO" id="GO:0006048">
    <property type="term" value="P:UDP-N-acetylglucosamine biosynthetic process"/>
    <property type="evidence" value="ECO:0007669"/>
    <property type="project" value="TreeGrafter"/>
</dbReference>
<dbReference type="CDD" id="cd05802">
    <property type="entry name" value="GlmM"/>
    <property type="match status" value="1"/>
</dbReference>
<dbReference type="FunFam" id="3.40.120.10:FF:000001">
    <property type="entry name" value="Phosphoglucosamine mutase"/>
    <property type="match status" value="1"/>
</dbReference>
<dbReference type="FunFam" id="3.40.120.10:FF:000003">
    <property type="entry name" value="Phosphoglucosamine mutase"/>
    <property type="match status" value="1"/>
</dbReference>
<dbReference type="Gene3D" id="3.40.120.10">
    <property type="entry name" value="Alpha-D-Glucose-1,6-Bisphosphate, subunit A, domain 3"/>
    <property type="match status" value="3"/>
</dbReference>
<dbReference type="Gene3D" id="3.30.310.50">
    <property type="entry name" value="Alpha-D-phosphohexomutase, C-terminal domain"/>
    <property type="match status" value="1"/>
</dbReference>
<dbReference type="HAMAP" id="MF_01554_B">
    <property type="entry name" value="GlmM_B"/>
    <property type="match status" value="1"/>
</dbReference>
<dbReference type="InterPro" id="IPR005844">
    <property type="entry name" value="A-D-PHexomutase_a/b/a-I"/>
</dbReference>
<dbReference type="InterPro" id="IPR016055">
    <property type="entry name" value="A-D-PHexomutase_a/b/a-I/II/III"/>
</dbReference>
<dbReference type="InterPro" id="IPR005845">
    <property type="entry name" value="A-D-PHexomutase_a/b/a-II"/>
</dbReference>
<dbReference type="InterPro" id="IPR005846">
    <property type="entry name" value="A-D-PHexomutase_a/b/a-III"/>
</dbReference>
<dbReference type="InterPro" id="IPR005843">
    <property type="entry name" value="A-D-PHexomutase_C"/>
</dbReference>
<dbReference type="InterPro" id="IPR036900">
    <property type="entry name" value="A-D-PHexomutase_C_sf"/>
</dbReference>
<dbReference type="InterPro" id="IPR016066">
    <property type="entry name" value="A-D-PHexomutase_CS"/>
</dbReference>
<dbReference type="InterPro" id="IPR005841">
    <property type="entry name" value="Alpha-D-phosphohexomutase_SF"/>
</dbReference>
<dbReference type="InterPro" id="IPR006352">
    <property type="entry name" value="GlmM_bact"/>
</dbReference>
<dbReference type="InterPro" id="IPR050060">
    <property type="entry name" value="Phosphoglucosamine_mutase"/>
</dbReference>
<dbReference type="NCBIfam" id="TIGR01455">
    <property type="entry name" value="glmM"/>
    <property type="match status" value="1"/>
</dbReference>
<dbReference type="NCBIfam" id="NF008139">
    <property type="entry name" value="PRK10887.1"/>
    <property type="match status" value="1"/>
</dbReference>
<dbReference type="PANTHER" id="PTHR42946:SF1">
    <property type="entry name" value="PHOSPHOGLUCOMUTASE (ALPHA-D-GLUCOSE-1,6-BISPHOSPHATE-DEPENDENT)"/>
    <property type="match status" value="1"/>
</dbReference>
<dbReference type="PANTHER" id="PTHR42946">
    <property type="entry name" value="PHOSPHOHEXOSE MUTASE"/>
    <property type="match status" value="1"/>
</dbReference>
<dbReference type="Pfam" id="PF02878">
    <property type="entry name" value="PGM_PMM_I"/>
    <property type="match status" value="1"/>
</dbReference>
<dbReference type="Pfam" id="PF02879">
    <property type="entry name" value="PGM_PMM_II"/>
    <property type="match status" value="1"/>
</dbReference>
<dbReference type="Pfam" id="PF02880">
    <property type="entry name" value="PGM_PMM_III"/>
    <property type="match status" value="1"/>
</dbReference>
<dbReference type="Pfam" id="PF00408">
    <property type="entry name" value="PGM_PMM_IV"/>
    <property type="match status" value="1"/>
</dbReference>
<dbReference type="PRINTS" id="PR00509">
    <property type="entry name" value="PGMPMM"/>
</dbReference>
<dbReference type="SUPFAM" id="SSF55957">
    <property type="entry name" value="Phosphoglucomutase, C-terminal domain"/>
    <property type="match status" value="1"/>
</dbReference>
<dbReference type="SUPFAM" id="SSF53738">
    <property type="entry name" value="Phosphoglucomutase, first 3 domains"/>
    <property type="match status" value="3"/>
</dbReference>
<dbReference type="PROSITE" id="PS00710">
    <property type="entry name" value="PGM_PMM"/>
    <property type="match status" value="1"/>
</dbReference>